<dbReference type="EMBL" id="DS028131">
    <property type="protein sequence ID" value="EEY55294.1"/>
    <property type="molecule type" value="Genomic_DNA"/>
</dbReference>
<dbReference type="RefSeq" id="XP_002903518.1">
    <property type="nucleotide sequence ID" value="XM_002903472.1"/>
</dbReference>
<dbReference type="SMR" id="D0NB65"/>
<dbReference type="STRING" id="403677.D0NB65"/>
<dbReference type="EnsemblProtists" id="PITG_09224T0">
    <property type="protein sequence ID" value="PITG_09224T0"/>
    <property type="gene ID" value="PITG_09224"/>
</dbReference>
<dbReference type="GeneID" id="9470549"/>
<dbReference type="KEGG" id="pif:PITG_09224"/>
<dbReference type="VEuPathDB" id="FungiDB:PITG_09224"/>
<dbReference type="eggNOG" id="ENOG502SXR9">
    <property type="taxonomic scope" value="Eukaryota"/>
</dbReference>
<dbReference type="HOGENOM" id="CLU_150342_0_0_1"/>
<dbReference type="InParanoid" id="D0NB65"/>
<dbReference type="OMA" id="WWATDEE"/>
<dbReference type="OrthoDB" id="97758at2759"/>
<dbReference type="Proteomes" id="UP000006643">
    <property type="component" value="Partially assembled WGS sequence"/>
</dbReference>
<dbReference type="GO" id="GO:0005576">
    <property type="term" value="C:extracellular region"/>
    <property type="evidence" value="ECO:0007669"/>
    <property type="project" value="UniProtKB-SubCell"/>
</dbReference>
<dbReference type="GO" id="GO:0043657">
    <property type="term" value="C:host cell"/>
    <property type="evidence" value="ECO:0007669"/>
    <property type="project" value="UniProtKB-SubCell"/>
</dbReference>
<dbReference type="GO" id="GO:0016020">
    <property type="term" value="C:membrane"/>
    <property type="evidence" value="ECO:0007669"/>
    <property type="project" value="UniProtKB-SubCell"/>
</dbReference>
<keyword id="KW-0472">Membrane</keyword>
<keyword id="KW-1185">Reference proteome</keyword>
<keyword id="KW-0964">Secreted</keyword>
<keyword id="KW-0732">Signal</keyword>
<keyword id="KW-0812">Transmembrane</keyword>
<keyword id="KW-1133">Transmembrane helix</keyword>
<keyword id="KW-0843">Virulence</keyword>
<sequence length="140" mass="15221">MRTSVFVALVVATFVATCISFTSAKNVAQIRDVDGGNNVQETRTLAEADDWWLASTNTEERSGGAGFFSKLRGKVHAKQSSGVMTTQKLNDQQVKTITKEVATTVKKDRRTWPMIKKGLKILYGALLAGLIIVGVEAMLS</sequence>
<reference key="1">
    <citation type="journal article" date="2009" name="Nature">
        <title>Genome sequence and analysis of the Irish potato famine pathogen Phytophthora infestans.</title>
        <authorList>
            <consortium name="The Broad Institute Genome Sequencing Platform"/>
            <person name="Haas B.J."/>
            <person name="Kamoun S."/>
            <person name="Zody M.C."/>
            <person name="Jiang R.H."/>
            <person name="Handsaker R.E."/>
            <person name="Cano L.M."/>
            <person name="Grabherr M."/>
            <person name="Kodira C.D."/>
            <person name="Raffaele S."/>
            <person name="Torto-Alalibo T."/>
            <person name="Bozkurt T.O."/>
            <person name="Ah-Fong A.M."/>
            <person name="Alvarado L."/>
            <person name="Anderson V.L."/>
            <person name="Armstrong M.R."/>
            <person name="Avrova A."/>
            <person name="Baxter L."/>
            <person name="Beynon J."/>
            <person name="Boevink P.C."/>
            <person name="Bollmann S.R."/>
            <person name="Bos J.I."/>
            <person name="Bulone V."/>
            <person name="Cai G."/>
            <person name="Cakir C."/>
            <person name="Carrington J.C."/>
            <person name="Chawner M."/>
            <person name="Conti L."/>
            <person name="Costanzo S."/>
            <person name="Ewan R."/>
            <person name="Fahlgren N."/>
            <person name="Fischbach M.A."/>
            <person name="Fugelstad J."/>
            <person name="Gilroy E.M."/>
            <person name="Gnerre S."/>
            <person name="Green P.J."/>
            <person name="Grenville-Briggs L.J."/>
            <person name="Griffith J."/>
            <person name="Grunwald N.J."/>
            <person name="Horn K."/>
            <person name="Horner N.R."/>
            <person name="Hu C.H."/>
            <person name="Huitema E."/>
            <person name="Jeong D.H."/>
            <person name="Jones A.M."/>
            <person name="Jones J.D."/>
            <person name="Jones R.W."/>
            <person name="Karlsson E.K."/>
            <person name="Kunjeti S.G."/>
            <person name="Lamour K."/>
            <person name="Liu Z."/>
            <person name="Ma L."/>
            <person name="Maclean D."/>
            <person name="Chibucos M.C."/>
            <person name="McDonald H."/>
            <person name="McWalters J."/>
            <person name="Meijer H.J."/>
            <person name="Morgan W."/>
            <person name="Morris P.F."/>
            <person name="Munro C.A."/>
            <person name="O'Neill K."/>
            <person name="Ospina-Giraldo M."/>
            <person name="Pinzon A."/>
            <person name="Pritchard L."/>
            <person name="Ramsahoye B."/>
            <person name="Ren Q."/>
            <person name="Restrepo S."/>
            <person name="Roy S."/>
            <person name="Sadanandom A."/>
            <person name="Savidor A."/>
            <person name="Schornack S."/>
            <person name="Schwartz D.C."/>
            <person name="Schumann U.D."/>
            <person name="Schwessinger B."/>
            <person name="Seyer L."/>
            <person name="Sharpe T."/>
            <person name="Silvar C."/>
            <person name="Song J."/>
            <person name="Studholme D.J."/>
            <person name="Sykes S."/>
            <person name="Thines M."/>
            <person name="van de Vondervoort P.J."/>
            <person name="Phuntumart V."/>
            <person name="Wawra S."/>
            <person name="Weide R."/>
            <person name="Win J."/>
            <person name="Young C."/>
            <person name="Zhou S."/>
            <person name="Fry W."/>
            <person name="Meyers B.C."/>
            <person name="van West P."/>
            <person name="Ristaino J."/>
            <person name="Govers F."/>
            <person name="Birch P.R."/>
            <person name="Whisson S.C."/>
            <person name="Judelson H.S."/>
            <person name="Nusbaum C."/>
        </authorList>
    </citation>
    <scope>NUCLEOTIDE SEQUENCE [LARGE SCALE GENOMIC DNA]</scope>
    <source>
        <strain>T30-4</strain>
    </source>
</reference>
<reference key="2">
    <citation type="journal article" date="2017" name="Front. Plant Sci.">
        <title>Conserved RXLR effector genes of Phytophthora infestans expressed at the early stage of potato infection are suppressive to host defense.</title>
        <authorList>
            <person name="Yin J."/>
            <person name="Gu B."/>
            <person name="Huang G."/>
            <person name="Tian Y."/>
            <person name="Quan J."/>
            <person name="Lindqvist-Kreuze H."/>
            <person name="Shan W."/>
        </authorList>
    </citation>
    <scope>INDUCTION</scope>
    <scope>DOMAIN</scope>
    <scope>FUNCTION</scope>
</reference>
<protein>
    <recommendedName>
        <fullName evidence="3">RxLR effector protein CRE9</fullName>
    </recommendedName>
    <alternativeName>
        <fullName evidence="3">Core RXLR effector 9</fullName>
    </alternativeName>
</protein>
<evidence type="ECO:0000255" key="1"/>
<evidence type="ECO:0000269" key="2">
    <source>
    </source>
</evidence>
<evidence type="ECO:0000303" key="3">
    <source>
    </source>
</evidence>
<evidence type="ECO:0000305" key="4"/>
<evidence type="ECO:0000305" key="5">
    <source>
    </source>
</evidence>
<gene>
    <name evidence="3" type="primary">CRE9</name>
    <name type="ORF">PITG_09224</name>
</gene>
<name>CRE9_PHYIT</name>
<comment type="function">
    <text evidence="2">Effector that is involved in host plant infection. Contributes to virulence during the early infection stage, by inhibiting plant defense responses induced by both PAMP-triggered immunity (PTI) and effector-triggered immunity (ETI).</text>
</comment>
<comment type="subcellular location">
    <subcellularLocation>
        <location evidence="5">Secreted</location>
    </subcellularLocation>
    <subcellularLocation>
        <location evidence="5">Host cell</location>
    </subcellularLocation>
    <subcellularLocation>
        <location evidence="1">Membrane</location>
        <topology evidence="1">Single-pass membrane protein</topology>
    </subcellularLocation>
</comment>
<comment type="induction">
    <text evidence="2">Expression is induced during host plant infection.</text>
</comment>
<comment type="domain">
    <text evidence="5">The RxLR-dEER motif acts to carry the protein into the host cell cytoplasm through binding to cell surface phosphatidylinositol-3-phosphate.</text>
</comment>
<comment type="similarity">
    <text evidence="4">Belongs to the RxLR effector family.</text>
</comment>
<accession>D0NB65</accession>
<feature type="signal peptide" evidence="1">
    <location>
        <begin position="1"/>
        <end position="24"/>
    </location>
</feature>
<feature type="chain" id="PRO_5003012466" description="RxLR effector protein CRE9">
    <location>
        <begin position="25"/>
        <end position="140"/>
    </location>
</feature>
<feature type="transmembrane region" description="Helical" evidence="1">
    <location>
        <begin position="119"/>
        <end position="139"/>
    </location>
</feature>
<feature type="short sequence motif" description="RxLR-dEER" evidence="5">
    <location>
        <begin position="43"/>
        <end position="61"/>
    </location>
</feature>
<proteinExistence type="evidence at transcript level"/>
<organism>
    <name type="scientific">Phytophthora infestans (strain T30-4)</name>
    <name type="common">Potato late blight agent</name>
    <dbReference type="NCBI Taxonomy" id="403677"/>
    <lineage>
        <taxon>Eukaryota</taxon>
        <taxon>Sar</taxon>
        <taxon>Stramenopiles</taxon>
        <taxon>Oomycota</taxon>
        <taxon>Peronosporales</taxon>
        <taxon>Peronosporaceae</taxon>
        <taxon>Phytophthora</taxon>
    </lineage>
</organism>